<evidence type="ECO:0000255" key="1">
    <source>
        <dbReference type="HAMAP-Rule" id="MF_00148"/>
    </source>
</evidence>
<reference key="1">
    <citation type="journal article" date="2005" name="J. Bacteriol.">
        <title>Swine and poultry pathogens: the complete genome sequences of two strains of Mycoplasma hyopneumoniae and a strain of Mycoplasma synoviae.</title>
        <authorList>
            <person name="Vasconcelos A.T.R."/>
            <person name="Ferreira H.B."/>
            <person name="Bizarro C.V."/>
            <person name="Bonatto S.L."/>
            <person name="Carvalho M.O."/>
            <person name="Pinto P.M."/>
            <person name="Almeida D.F."/>
            <person name="Almeida L.G.P."/>
            <person name="Almeida R."/>
            <person name="Alves-Junior L."/>
            <person name="Assuncao E.N."/>
            <person name="Azevedo V.A.C."/>
            <person name="Bogo M.R."/>
            <person name="Brigido M.M."/>
            <person name="Brocchi M."/>
            <person name="Burity H.A."/>
            <person name="Camargo A.A."/>
            <person name="Camargo S.S."/>
            <person name="Carepo M.S."/>
            <person name="Carraro D.M."/>
            <person name="de Mattos Cascardo J.C."/>
            <person name="Castro L.A."/>
            <person name="Cavalcanti G."/>
            <person name="Chemale G."/>
            <person name="Collevatti R.G."/>
            <person name="Cunha C.W."/>
            <person name="Dallagiovanna B."/>
            <person name="Dambros B.P."/>
            <person name="Dellagostin O.A."/>
            <person name="Falcao C."/>
            <person name="Fantinatti-Garboggini F."/>
            <person name="Felipe M.S.S."/>
            <person name="Fiorentin L."/>
            <person name="Franco G.R."/>
            <person name="Freitas N.S.A."/>
            <person name="Frias D."/>
            <person name="Grangeiro T.B."/>
            <person name="Grisard E.C."/>
            <person name="Guimaraes C.T."/>
            <person name="Hungria M."/>
            <person name="Jardim S.N."/>
            <person name="Krieger M.A."/>
            <person name="Laurino J.P."/>
            <person name="Lima L.F.A."/>
            <person name="Lopes M.I."/>
            <person name="Loreto E.L.S."/>
            <person name="Madeira H.M.F."/>
            <person name="Manfio G.P."/>
            <person name="Maranhao A.Q."/>
            <person name="Martinkovics C.T."/>
            <person name="Medeiros S.R.B."/>
            <person name="Moreira M.A.M."/>
            <person name="Neiva M."/>
            <person name="Ramalho-Neto C.E."/>
            <person name="Nicolas M.F."/>
            <person name="Oliveira S.C."/>
            <person name="Paixao R.F.C."/>
            <person name="Pedrosa F.O."/>
            <person name="Pena S.D.J."/>
            <person name="Pereira M."/>
            <person name="Pereira-Ferrari L."/>
            <person name="Piffer I."/>
            <person name="Pinto L.S."/>
            <person name="Potrich D.P."/>
            <person name="Salim A.C.M."/>
            <person name="Santos F.R."/>
            <person name="Schmitt R."/>
            <person name="Schneider M.P.C."/>
            <person name="Schrank A."/>
            <person name="Schrank I.S."/>
            <person name="Schuck A.F."/>
            <person name="Seuanez H.N."/>
            <person name="Silva D.W."/>
            <person name="Silva R."/>
            <person name="Silva S.C."/>
            <person name="Soares C.M.A."/>
            <person name="Souza K.R.L."/>
            <person name="Souza R.C."/>
            <person name="Staats C.C."/>
            <person name="Steffens M.B.R."/>
            <person name="Teixeira S.M.R."/>
            <person name="Urmenyi T.P."/>
            <person name="Vainstein M.H."/>
            <person name="Zuccherato L.W."/>
            <person name="Simpson A.J.G."/>
            <person name="Zaha A."/>
        </authorList>
    </citation>
    <scope>NUCLEOTIDE SEQUENCE [LARGE SCALE GENOMIC DNA]</scope>
    <source>
        <strain>7448</strain>
    </source>
</reference>
<name>UNG_MESH7</name>
<keyword id="KW-0963">Cytoplasm</keyword>
<keyword id="KW-0227">DNA damage</keyword>
<keyword id="KW-0234">DNA repair</keyword>
<keyword id="KW-0378">Hydrolase</keyword>
<comment type="function">
    <text evidence="1">Excises uracil residues from the DNA which can arise as a result of misincorporation of dUMP residues by DNA polymerase or due to deamination of cytosine.</text>
</comment>
<comment type="catalytic activity">
    <reaction evidence="1">
        <text>Hydrolyzes single-stranded DNA or mismatched double-stranded DNA and polynucleotides, releasing free uracil.</text>
        <dbReference type="EC" id="3.2.2.27"/>
    </reaction>
</comment>
<comment type="subcellular location">
    <subcellularLocation>
        <location evidence="1">Cytoplasm</location>
    </subcellularLocation>
</comment>
<comment type="similarity">
    <text evidence="1">Belongs to the uracil-DNA glycosylase (UDG) superfamily. UNG family.</text>
</comment>
<dbReference type="EC" id="3.2.2.27" evidence="1"/>
<dbReference type="EMBL" id="AE017244">
    <property type="protein sequence ID" value="AAZ53505.1"/>
    <property type="molecule type" value="Genomic_DNA"/>
</dbReference>
<dbReference type="RefSeq" id="WP_011290029.1">
    <property type="nucleotide sequence ID" value="NC_007332.1"/>
</dbReference>
<dbReference type="SMR" id="Q4A8N4"/>
<dbReference type="KEGG" id="mhp:MHP7448_0130"/>
<dbReference type="HOGENOM" id="CLU_032162_3_2_14"/>
<dbReference type="Proteomes" id="UP000000553">
    <property type="component" value="Chromosome"/>
</dbReference>
<dbReference type="GO" id="GO:0005737">
    <property type="term" value="C:cytoplasm"/>
    <property type="evidence" value="ECO:0007669"/>
    <property type="project" value="UniProtKB-SubCell"/>
</dbReference>
<dbReference type="GO" id="GO:0004844">
    <property type="term" value="F:uracil DNA N-glycosylase activity"/>
    <property type="evidence" value="ECO:0007669"/>
    <property type="project" value="UniProtKB-UniRule"/>
</dbReference>
<dbReference type="GO" id="GO:0097510">
    <property type="term" value="P:base-excision repair, AP site formation via deaminated base removal"/>
    <property type="evidence" value="ECO:0007669"/>
    <property type="project" value="TreeGrafter"/>
</dbReference>
<dbReference type="CDD" id="cd10027">
    <property type="entry name" value="UDG-F1-like"/>
    <property type="match status" value="1"/>
</dbReference>
<dbReference type="Gene3D" id="3.40.470.10">
    <property type="entry name" value="Uracil-DNA glycosylase-like domain"/>
    <property type="match status" value="1"/>
</dbReference>
<dbReference type="HAMAP" id="MF_00148">
    <property type="entry name" value="UDG"/>
    <property type="match status" value="1"/>
</dbReference>
<dbReference type="InterPro" id="IPR002043">
    <property type="entry name" value="UDG_fam1"/>
</dbReference>
<dbReference type="InterPro" id="IPR018085">
    <property type="entry name" value="Ura-DNA_Glyclase_AS"/>
</dbReference>
<dbReference type="InterPro" id="IPR005122">
    <property type="entry name" value="Uracil-DNA_glycosylase-like"/>
</dbReference>
<dbReference type="InterPro" id="IPR036895">
    <property type="entry name" value="Uracil-DNA_glycosylase-like_sf"/>
</dbReference>
<dbReference type="NCBIfam" id="NF003589">
    <property type="entry name" value="PRK05254.1-2"/>
    <property type="match status" value="1"/>
</dbReference>
<dbReference type="NCBIfam" id="NF003592">
    <property type="entry name" value="PRK05254.1-5"/>
    <property type="match status" value="1"/>
</dbReference>
<dbReference type="NCBIfam" id="TIGR00628">
    <property type="entry name" value="ung"/>
    <property type="match status" value="1"/>
</dbReference>
<dbReference type="PANTHER" id="PTHR11264">
    <property type="entry name" value="URACIL-DNA GLYCOSYLASE"/>
    <property type="match status" value="1"/>
</dbReference>
<dbReference type="PANTHER" id="PTHR11264:SF0">
    <property type="entry name" value="URACIL-DNA GLYCOSYLASE"/>
    <property type="match status" value="1"/>
</dbReference>
<dbReference type="Pfam" id="PF03167">
    <property type="entry name" value="UDG"/>
    <property type="match status" value="1"/>
</dbReference>
<dbReference type="SMART" id="SM00986">
    <property type="entry name" value="UDG"/>
    <property type="match status" value="1"/>
</dbReference>
<dbReference type="SMART" id="SM00987">
    <property type="entry name" value="UreE_C"/>
    <property type="match status" value="1"/>
</dbReference>
<dbReference type="SUPFAM" id="SSF52141">
    <property type="entry name" value="Uracil-DNA glycosylase-like"/>
    <property type="match status" value="1"/>
</dbReference>
<dbReference type="PROSITE" id="PS00130">
    <property type="entry name" value="U_DNA_GLYCOSYLASE"/>
    <property type="match status" value="1"/>
</dbReference>
<feature type="chain" id="PRO_1000199790" description="Uracil-DNA glycosylase">
    <location>
        <begin position="1"/>
        <end position="219"/>
    </location>
</feature>
<feature type="active site" description="Proton acceptor" evidence="1">
    <location>
        <position position="63"/>
    </location>
</feature>
<proteinExistence type="inferred from homology"/>
<sequence>MESKLSFESFFYNESKKAYFQKLMEKLDEEYEKYQVFPNKKDLFRAIELTNFATLKIVIIGQDPYHRKGQADGLAFSTRTKILPPSLRNLFLEIKNAYPNFSKENGNLENWAKQGVLLLNHVLTVRKSSPNSHKNIGWEVFSSNLINFIVKNKVDIVFLLLGKKAKLAVKNINLEKQKVFAYSHPSPFSFAKSLKNSMVFRKINDFLKEKKRLEINWNL</sequence>
<accession>Q4A8N4</accession>
<gene>
    <name evidence="1" type="primary">ung</name>
    <name type="ordered locus">MHP7448_0130</name>
</gene>
<protein>
    <recommendedName>
        <fullName evidence="1">Uracil-DNA glycosylase</fullName>
        <shortName evidence="1">UDG</shortName>
        <ecNumber evidence="1">3.2.2.27</ecNumber>
    </recommendedName>
</protein>
<organism>
    <name type="scientific">Mesomycoplasma hyopneumoniae (strain 7448)</name>
    <name type="common">Mycoplasma hyopneumoniae</name>
    <dbReference type="NCBI Taxonomy" id="262722"/>
    <lineage>
        <taxon>Bacteria</taxon>
        <taxon>Bacillati</taxon>
        <taxon>Mycoplasmatota</taxon>
        <taxon>Mycoplasmoidales</taxon>
        <taxon>Metamycoplasmataceae</taxon>
        <taxon>Mesomycoplasma</taxon>
    </lineage>
</organism>